<accession>A4KA38</accession>
<name>PRO10_PHLPR</name>
<comment type="function">
    <text evidence="1">Binds to actin and affects the structure of the cytoskeleton. At high concentrations, profilin prevents the polymerization of actin, whereas it enhances it at low concentrations (By similarity).</text>
</comment>
<comment type="subunit">
    <text evidence="1">Occurs in many kinds of cells as a complex with monomeric actin in a 1:1 ratio.</text>
</comment>
<comment type="subcellular location">
    <subcellularLocation>
        <location evidence="1">Cytoplasm</location>
        <location evidence="1">Cytoskeleton</location>
    </subcellularLocation>
</comment>
<comment type="PTM">
    <text evidence="1">Phosphorylated by MAP kinases.</text>
</comment>
<comment type="polymorphism">
    <text>Several isoforms of the allergen exist due to polymorphism.</text>
</comment>
<comment type="allergen">
    <text>Causes an allergic reaction in human.</text>
</comment>
<comment type="miscellaneous">
    <text evidence="3">The variability of the residues taking part of IgE-binding epitopes might be responsible of the difference in cross-reactivity among olive pollen cultivars, and between distantly related pollen species, leading to a variable range of allergy reactions among atopic patients.</text>
</comment>
<comment type="similarity">
    <text evidence="2">Belongs to the profilin family.</text>
</comment>
<dbReference type="EMBL" id="DQ663542">
    <property type="protein sequence ID" value="ABG81295.1"/>
    <property type="molecule type" value="mRNA"/>
</dbReference>
<dbReference type="SMR" id="A4KA38"/>
<dbReference type="Allergome" id="553">
    <property type="allergen name" value="Phl p 12"/>
</dbReference>
<dbReference type="GO" id="GO:0005938">
    <property type="term" value="C:cell cortex"/>
    <property type="evidence" value="ECO:0007669"/>
    <property type="project" value="TreeGrafter"/>
</dbReference>
<dbReference type="GO" id="GO:0005856">
    <property type="term" value="C:cytoskeleton"/>
    <property type="evidence" value="ECO:0007669"/>
    <property type="project" value="UniProtKB-SubCell"/>
</dbReference>
<dbReference type="GO" id="GO:0003785">
    <property type="term" value="F:actin monomer binding"/>
    <property type="evidence" value="ECO:0007669"/>
    <property type="project" value="TreeGrafter"/>
</dbReference>
<dbReference type="CDD" id="cd00148">
    <property type="entry name" value="PROF"/>
    <property type="match status" value="1"/>
</dbReference>
<dbReference type="FunFam" id="3.30.450.30:FF:000001">
    <property type="entry name" value="Profilin"/>
    <property type="match status" value="1"/>
</dbReference>
<dbReference type="Gene3D" id="3.30.450.30">
    <property type="entry name" value="Dynein light chain 2a, cytoplasmic"/>
    <property type="match status" value="1"/>
</dbReference>
<dbReference type="InterPro" id="IPR048278">
    <property type="entry name" value="PFN"/>
</dbReference>
<dbReference type="InterPro" id="IPR005455">
    <property type="entry name" value="PFN_euk"/>
</dbReference>
<dbReference type="InterPro" id="IPR036140">
    <property type="entry name" value="PFN_sf"/>
</dbReference>
<dbReference type="InterPro" id="IPR027310">
    <property type="entry name" value="Profilin_CS"/>
</dbReference>
<dbReference type="PANTHER" id="PTHR11604">
    <property type="entry name" value="PROFILIN"/>
    <property type="match status" value="1"/>
</dbReference>
<dbReference type="PANTHER" id="PTHR11604:SF31">
    <property type="entry name" value="PROFILIN"/>
    <property type="match status" value="1"/>
</dbReference>
<dbReference type="Pfam" id="PF00235">
    <property type="entry name" value="Profilin"/>
    <property type="match status" value="1"/>
</dbReference>
<dbReference type="PRINTS" id="PR00392">
    <property type="entry name" value="PROFILIN"/>
</dbReference>
<dbReference type="PRINTS" id="PR01640">
    <property type="entry name" value="PROFILINPLNT"/>
</dbReference>
<dbReference type="SMART" id="SM00392">
    <property type="entry name" value="PROF"/>
    <property type="match status" value="1"/>
</dbReference>
<dbReference type="SUPFAM" id="SSF55770">
    <property type="entry name" value="Profilin (actin-binding protein)"/>
    <property type="match status" value="1"/>
</dbReference>
<dbReference type="PROSITE" id="PS00414">
    <property type="entry name" value="PROFILIN"/>
    <property type="match status" value="1"/>
</dbReference>
<sequence>MSWQAYVDEHLMCEIEGHHLASAAILGHDGTVWAQSADFPQFKPEEITGIMKDFDEPGHLAPTGMFVATAKYMVIQGEPGAVIRGKKGAGGITIKKTGQALVVGIYDEPMTPGQCSMVVERLGDYLVKQGL</sequence>
<organism>
    <name type="scientific">Phleum pratense</name>
    <name type="common">Common timothy</name>
    <dbReference type="NCBI Taxonomy" id="15957"/>
    <lineage>
        <taxon>Eukaryota</taxon>
        <taxon>Viridiplantae</taxon>
        <taxon>Streptophyta</taxon>
        <taxon>Embryophyta</taxon>
        <taxon>Tracheophyta</taxon>
        <taxon>Spermatophyta</taxon>
        <taxon>Magnoliopsida</taxon>
        <taxon>Liliopsida</taxon>
        <taxon>Poales</taxon>
        <taxon>Poaceae</taxon>
        <taxon>BOP clade</taxon>
        <taxon>Pooideae</taxon>
        <taxon>Poodae</taxon>
        <taxon>Poeae</taxon>
        <taxon>Poeae Chloroplast Group 2 (Poeae type)</taxon>
        <taxon>Poodinae</taxon>
        <taxon>Phleinae</taxon>
        <taxon>Phleum</taxon>
    </lineage>
</organism>
<evidence type="ECO:0000250" key="1"/>
<evidence type="ECO:0000305" key="2"/>
<evidence type="ECO:0000305" key="3">
    <source>
    </source>
</evidence>
<reference key="1">
    <citation type="journal article" date="2012" name="PLoS ONE">
        <title>Characterization of profilin polymorphism in pollen with a focus on multifunctionality.</title>
        <authorList>
            <person name="Jimenez-Lopez J.C."/>
            <person name="Morales S."/>
            <person name="Castro A.J."/>
            <person name="Volkmann D."/>
            <person name="Rodriguez-Garcia M.I."/>
            <person name="Alche Jde D."/>
        </authorList>
    </citation>
    <scope>NUCLEOTIDE SEQUENCE [MRNA]</scope>
    <scope>POLYMORPHISM</scope>
    <source>
        <strain>cv. Pratense</strain>
    </source>
</reference>
<reference key="2">
    <citation type="journal article" date="2013" name="PLoS ONE">
        <title>Analysis of the effects of polymorphism on pollen profilin structural functionality and the generation of conformational, T- and B-cell epitopes.</title>
        <authorList>
            <person name="Jimenez-Lopez J.C."/>
            <person name="Rodriguez-Garcia M.I."/>
            <person name="Alche J.D."/>
        </authorList>
    </citation>
    <scope>3D-STRUCTURE MODELING</scope>
    <scope>DISULFIDE BOND</scope>
</reference>
<proteinExistence type="evidence at protein level"/>
<keyword id="KW-0009">Actin-binding</keyword>
<keyword id="KW-0020">Allergen</keyword>
<keyword id="KW-0963">Cytoplasm</keyword>
<keyword id="KW-0206">Cytoskeleton</keyword>
<keyword id="KW-1015">Disulfide bond</keyword>
<keyword id="KW-0597">Phosphoprotein</keyword>
<protein>
    <recommendedName>
        <fullName>Profilin-10</fullName>
    </recommendedName>
    <alternativeName>
        <fullName>Pollen allergen Phl p 12</fullName>
    </alternativeName>
    <alternativeName>
        <fullName>pollen profilin variant 8</fullName>
    </alternativeName>
    <allergenName>Phl p 12</allergenName>
</protein>
<feature type="initiator methionine" description="Removed" evidence="1">
    <location>
        <position position="1"/>
    </location>
</feature>
<feature type="chain" id="PRO_0000425064" description="Profilin-10">
    <location>
        <begin position="2"/>
        <end position="131"/>
    </location>
</feature>
<feature type="short sequence motif" description="Involved in PIP2 interaction">
    <location>
        <begin position="81"/>
        <end position="97"/>
    </location>
</feature>
<feature type="modified residue" description="Phosphothreonine" evidence="1">
    <location>
        <position position="111"/>
    </location>
</feature>
<feature type="disulfide bond" evidence="3">
    <location>
        <begin position="13"/>
        <end position="115"/>
    </location>
</feature>